<protein>
    <recommendedName>
        <fullName evidence="1">Imidazolonepropionase</fullName>
        <ecNumber evidence="1">3.5.2.7</ecNumber>
    </recommendedName>
    <alternativeName>
        <fullName evidence="1">Imidazolone-5-propionate hydrolase</fullName>
    </alternativeName>
</protein>
<comment type="function">
    <text evidence="1">Catalyzes the hydrolytic cleavage of the carbon-nitrogen bond in imidazolone-5-propanoate to yield N-formimidoyl-L-glutamate. It is the third step in the universal histidine degradation pathway.</text>
</comment>
<comment type="catalytic activity">
    <reaction evidence="1">
        <text>4-imidazolone-5-propanoate + H2O = N-formimidoyl-L-glutamate</text>
        <dbReference type="Rhea" id="RHEA:23660"/>
        <dbReference type="ChEBI" id="CHEBI:15377"/>
        <dbReference type="ChEBI" id="CHEBI:58928"/>
        <dbReference type="ChEBI" id="CHEBI:77893"/>
        <dbReference type="EC" id="3.5.2.7"/>
    </reaction>
</comment>
<comment type="cofactor">
    <cofactor evidence="1">
        <name>Zn(2+)</name>
        <dbReference type="ChEBI" id="CHEBI:29105"/>
    </cofactor>
    <cofactor evidence="1">
        <name>Fe(3+)</name>
        <dbReference type="ChEBI" id="CHEBI:29034"/>
    </cofactor>
    <text evidence="1">Binds 1 zinc or iron ion per subunit.</text>
</comment>
<comment type="pathway">
    <text evidence="1">Amino-acid degradation; L-histidine degradation into L-glutamate; N-formimidoyl-L-glutamate from L-histidine: step 3/3.</text>
</comment>
<comment type="subcellular location">
    <subcellularLocation>
        <location evidence="1">Cytoplasm</location>
    </subcellularLocation>
</comment>
<comment type="similarity">
    <text evidence="1">Belongs to the metallo-dependent hydrolases superfamily. HutI family.</text>
</comment>
<reference key="1">
    <citation type="submission" date="2006-05" db="EMBL/GenBank/DDBJ databases">
        <title>Complete sequence of chromosome of Silicibacter sp. TM1040.</title>
        <authorList>
            <consortium name="US DOE Joint Genome Institute"/>
            <person name="Copeland A."/>
            <person name="Lucas S."/>
            <person name="Lapidus A."/>
            <person name="Barry K."/>
            <person name="Detter J.C."/>
            <person name="Glavina del Rio T."/>
            <person name="Hammon N."/>
            <person name="Israni S."/>
            <person name="Dalin E."/>
            <person name="Tice H."/>
            <person name="Pitluck S."/>
            <person name="Brettin T."/>
            <person name="Bruce D."/>
            <person name="Han C."/>
            <person name="Tapia R."/>
            <person name="Goodwin L."/>
            <person name="Thompson L.S."/>
            <person name="Gilna P."/>
            <person name="Schmutz J."/>
            <person name="Larimer F."/>
            <person name="Land M."/>
            <person name="Hauser L."/>
            <person name="Kyrpides N."/>
            <person name="Kim E."/>
            <person name="Belas R."/>
            <person name="Moran M.A."/>
            <person name="Buchan A."/>
            <person name="Gonzalez J.M."/>
            <person name="Schell M.A."/>
            <person name="Sun F."/>
            <person name="Richardson P."/>
        </authorList>
    </citation>
    <scope>NUCLEOTIDE SEQUENCE [LARGE SCALE GENOMIC DNA]</scope>
    <source>
        <strain>TM1040</strain>
    </source>
</reference>
<feature type="chain" id="PRO_0000306516" description="Imidazolonepropionase">
    <location>
        <begin position="1"/>
        <end position="405"/>
    </location>
</feature>
<feature type="binding site" evidence="1">
    <location>
        <position position="70"/>
    </location>
    <ligand>
        <name>Fe(3+)</name>
        <dbReference type="ChEBI" id="CHEBI:29034"/>
    </ligand>
</feature>
<feature type="binding site" evidence="1">
    <location>
        <position position="70"/>
    </location>
    <ligand>
        <name>Zn(2+)</name>
        <dbReference type="ChEBI" id="CHEBI:29105"/>
    </ligand>
</feature>
<feature type="binding site" evidence="1">
    <location>
        <position position="72"/>
    </location>
    <ligand>
        <name>Fe(3+)</name>
        <dbReference type="ChEBI" id="CHEBI:29034"/>
    </ligand>
</feature>
<feature type="binding site" evidence="1">
    <location>
        <position position="72"/>
    </location>
    <ligand>
        <name>Zn(2+)</name>
        <dbReference type="ChEBI" id="CHEBI:29105"/>
    </ligand>
</feature>
<feature type="binding site" evidence="1">
    <location>
        <position position="79"/>
    </location>
    <ligand>
        <name>4-imidazolone-5-propanoate</name>
        <dbReference type="ChEBI" id="CHEBI:77893"/>
    </ligand>
</feature>
<feature type="binding site" evidence="1">
    <location>
        <position position="142"/>
    </location>
    <ligand>
        <name>4-imidazolone-5-propanoate</name>
        <dbReference type="ChEBI" id="CHEBI:77893"/>
    </ligand>
</feature>
<feature type="binding site" evidence="1">
    <location>
        <position position="142"/>
    </location>
    <ligand>
        <name>N-formimidoyl-L-glutamate</name>
        <dbReference type="ChEBI" id="CHEBI:58928"/>
    </ligand>
</feature>
<feature type="binding site" evidence="1">
    <location>
        <position position="175"/>
    </location>
    <ligand>
        <name>4-imidazolone-5-propanoate</name>
        <dbReference type="ChEBI" id="CHEBI:77893"/>
    </ligand>
</feature>
<feature type="binding site" evidence="1">
    <location>
        <position position="240"/>
    </location>
    <ligand>
        <name>Fe(3+)</name>
        <dbReference type="ChEBI" id="CHEBI:29034"/>
    </ligand>
</feature>
<feature type="binding site" evidence="1">
    <location>
        <position position="240"/>
    </location>
    <ligand>
        <name>Zn(2+)</name>
        <dbReference type="ChEBI" id="CHEBI:29105"/>
    </ligand>
</feature>
<feature type="binding site" evidence="1">
    <location>
        <position position="243"/>
    </location>
    <ligand>
        <name>4-imidazolone-5-propanoate</name>
        <dbReference type="ChEBI" id="CHEBI:77893"/>
    </ligand>
</feature>
<feature type="binding site" evidence="1">
    <location>
        <position position="315"/>
    </location>
    <ligand>
        <name>Fe(3+)</name>
        <dbReference type="ChEBI" id="CHEBI:29034"/>
    </ligand>
</feature>
<feature type="binding site" evidence="1">
    <location>
        <position position="315"/>
    </location>
    <ligand>
        <name>Zn(2+)</name>
        <dbReference type="ChEBI" id="CHEBI:29105"/>
    </ligand>
</feature>
<feature type="binding site" evidence="1">
    <location>
        <position position="317"/>
    </location>
    <ligand>
        <name>N-formimidoyl-L-glutamate</name>
        <dbReference type="ChEBI" id="CHEBI:58928"/>
    </ligand>
</feature>
<feature type="binding site" evidence="1">
    <location>
        <position position="319"/>
    </location>
    <ligand>
        <name>N-formimidoyl-L-glutamate</name>
        <dbReference type="ChEBI" id="CHEBI:58928"/>
    </ligand>
</feature>
<feature type="binding site" evidence="1">
    <location>
        <position position="320"/>
    </location>
    <ligand>
        <name>4-imidazolone-5-propanoate</name>
        <dbReference type="ChEBI" id="CHEBI:77893"/>
    </ligand>
</feature>
<name>HUTI_RUEST</name>
<organism>
    <name type="scientific">Ruegeria sp. (strain TM1040)</name>
    <name type="common">Silicibacter sp.</name>
    <dbReference type="NCBI Taxonomy" id="292414"/>
    <lineage>
        <taxon>Bacteria</taxon>
        <taxon>Pseudomonadati</taxon>
        <taxon>Pseudomonadota</taxon>
        <taxon>Alphaproteobacteria</taxon>
        <taxon>Rhodobacterales</taxon>
        <taxon>Roseobacteraceae</taxon>
        <taxon>Ruegeria</taxon>
    </lineage>
</organism>
<proteinExistence type="inferred from homology"/>
<evidence type="ECO:0000255" key="1">
    <source>
        <dbReference type="HAMAP-Rule" id="MF_00372"/>
    </source>
</evidence>
<gene>
    <name evidence="1" type="primary">hutI</name>
    <name type="ordered locus">TM1040_3004</name>
</gene>
<dbReference type="EC" id="3.5.2.7" evidence="1"/>
<dbReference type="EMBL" id="CP000377">
    <property type="protein sequence ID" value="ABF65736.1"/>
    <property type="molecule type" value="Genomic_DNA"/>
</dbReference>
<dbReference type="RefSeq" id="WP_011540314.1">
    <property type="nucleotide sequence ID" value="NC_008044.1"/>
</dbReference>
<dbReference type="SMR" id="Q1GC80"/>
<dbReference type="STRING" id="292414.TM1040_3004"/>
<dbReference type="KEGG" id="sit:TM1040_3004"/>
<dbReference type="eggNOG" id="COG1228">
    <property type="taxonomic scope" value="Bacteria"/>
</dbReference>
<dbReference type="HOGENOM" id="CLU_041647_0_0_5"/>
<dbReference type="OrthoDB" id="9776455at2"/>
<dbReference type="UniPathway" id="UPA00379">
    <property type="reaction ID" value="UER00551"/>
</dbReference>
<dbReference type="Proteomes" id="UP000000636">
    <property type="component" value="Chromosome"/>
</dbReference>
<dbReference type="GO" id="GO:0005737">
    <property type="term" value="C:cytoplasm"/>
    <property type="evidence" value="ECO:0007669"/>
    <property type="project" value="UniProtKB-SubCell"/>
</dbReference>
<dbReference type="GO" id="GO:0050480">
    <property type="term" value="F:imidazolonepropionase activity"/>
    <property type="evidence" value="ECO:0007669"/>
    <property type="project" value="UniProtKB-UniRule"/>
</dbReference>
<dbReference type="GO" id="GO:0005506">
    <property type="term" value="F:iron ion binding"/>
    <property type="evidence" value="ECO:0007669"/>
    <property type="project" value="UniProtKB-UniRule"/>
</dbReference>
<dbReference type="GO" id="GO:0008270">
    <property type="term" value="F:zinc ion binding"/>
    <property type="evidence" value="ECO:0007669"/>
    <property type="project" value="UniProtKB-UniRule"/>
</dbReference>
<dbReference type="GO" id="GO:0019556">
    <property type="term" value="P:L-histidine catabolic process to glutamate and formamide"/>
    <property type="evidence" value="ECO:0007669"/>
    <property type="project" value="UniProtKB-UniPathway"/>
</dbReference>
<dbReference type="GO" id="GO:0019557">
    <property type="term" value="P:L-histidine catabolic process to glutamate and formate"/>
    <property type="evidence" value="ECO:0007669"/>
    <property type="project" value="UniProtKB-UniPathway"/>
</dbReference>
<dbReference type="FunFam" id="3.20.20.140:FF:000007">
    <property type="entry name" value="Imidazolonepropionase"/>
    <property type="match status" value="1"/>
</dbReference>
<dbReference type="Gene3D" id="3.20.20.140">
    <property type="entry name" value="Metal-dependent hydrolases"/>
    <property type="match status" value="1"/>
</dbReference>
<dbReference type="Gene3D" id="2.30.40.10">
    <property type="entry name" value="Urease, subunit C, domain 1"/>
    <property type="match status" value="1"/>
</dbReference>
<dbReference type="HAMAP" id="MF_00372">
    <property type="entry name" value="HutI"/>
    <property type="match status" value="1"/>
</dbReference>
<dbReference type="InterPro" id="IPR006680">
    <property type="entry name" value="Amidohydro-rel"/>
</dbReference>
<dbReference type="InterPro" id="IPR005920">
    <property type="entry name" value="HutI"/>
</dbReference>
<dbReference type="InterPro" id="IPR011059">
    <property type="entry name" value="Metal-dep_hydrolase_composite"/>
</dbReference>
<dbReference type="InterPro" id="IPR032466">
    <property type="entry name" value="Metal_Hydrolase"/>
</dbReference>
<dbReference type="NCBIfam" id="TIGR01224">
    <property type="entry name" value="hutI"/>
    <property type="match status" value="1"/>
</dbReference>
<dbReference type="PANTHER" id="PTHR42752">
    <property type="entry name" value="IMIDAZOLONEPROPIONASE"/>
    <property type="match status" value="1"/>
</dbReference>
<dbReference type="PANTHER" id="PTHR42752:SF1">
    <property type="entry name" value="IMIDAZOLONEPROPIONASE-RELATED"/>
    <property type="match status" value="1"/>
</dbReference>
<dbReference type="Pfam" id="PF01979">
    <property type="entry name" value="Amidohydro_1"/>
    <property type="match status" value="1"/>
</dbReference>
<dbReference type="SUPFAM" id="SSF51338">
    <property type="entry name" value="Composite domain of metallo-dependent hydrolases"/>
    <property type="match status" value="1"/>
</dbReference>
<dbReference type="SUPFAM" id="SSF51556">
    <property type="entry name" value="Metallo-dependent hydrolases"/>
    <property type="match status" value="1"/>
</dbReference>
<keyword id="KW-0963">Cytoplasm</keyword>
<keyword id="KW-0369">Histidine metabolism</keyword>
<keyword id="KW-0378">Hydrolase</keyword>
<keyword id="KW-0408">Iron</keyword>
<keyword id="KW-0479">Metal-binding</keyword>
<keyword id="KW-1185">Reference proteome</keyword>
<keyword id="KW-0862">Zinc</keyword>
<accession>Q1GC80</accession>
<sequence length="405" mass="42718">MRDTYVLSGARLATMEAEGSYGLVEDGAIAIQGDEILWCGARGALPDTYAACPSTDLNGRLVTPAFIDCHTHIVFGGDRAGEFEMRLEGATYEEVAKAGGGIVSTVTATRAASLDALVTGALPRLDALIAEGVSTVEVKSGYGLDRETELNMLRAARRLAEHRDVTVKTTFLGAHAVPAEYAGRADAYLDEVCLPTLRAAHAEGLVDAVDGFCEGIAFSAAQIAKVFDVAAELGLPVKLHAEQLSHQGGTKLAAERGALSVDHVEYATEADARAMAASGSVAVLLPGAFYTIRETQVPPVAEFRMHGVPMALATDCNPGSSPLTSLLLTLNMGCTLFRLTPEEALAGVTRNAARALGMQDRGRIAPGLRADLAVWDVSRPAELAYRIGFNPLYARVMGGKMEVRT</sequence>